<keyword id="KW-0520">NAD</keyword>
<keyword id="KW-0560">Oxidoreductase</keyword>
<keyword id="KW-1185">Reference proteome</keyword>
<keyword id="KW-0816">Tricarboxylic acid cycle</keyword>
<evidence type="ECO:0000255" key="1">
    <source>
        <dbReference type="HAMAP-Rule" id="MF_00487"/>
    </source>
</evidence>
<gene>
    <name evidence="1" type="primary">mdh</name>
    <name type="ordered locus">AMF_421</name>
</gene>
<feature type="chain" id="PRO_1000191638" description="Malate dehydrogenase">
    <location>
        <begin position="1"/>
        <end position="317"/>
    </location>
</feature>
<feature type="active site" description="Proton acceptor" evidence="1">
    <location>
        <position position="180"/>
    </location>
</feature>
<feature type="binding site" evidence="1">
    <location>
        <begin position="13"/>
        <end position="18"/>
    </location>
    <ligand>
        <name>NAD(+)</name>
        <dbReference type="ChEBI" id="CHEBI:57540"/>
    </ligand>
</feature>
<feature type="binding site" evidence="1">
    <location>
        <position position="38"/>
    </location>
    <ligand>
        <name>NAD(+)</name>
        <dbReference type="ChEBI" id="CHEBI:57540"/>
    </ligand>
</feature>
<feature type="binding site" evidence="1">
    <location>
        <position position="87"/>
    </location>
    <ligand>
        <name>substrate</name>
    </ligand>
</feature>
<feature type="binding site" evidence="1">
    <location>
        <position position="93"/>
    </location>
    <ligand>
        <name>substrate</name>
    </ligand>
</feature>
<feature type="binding site" evidence="1">
    <location>
        <position position="100"/>
    </location>
    <ligand>
        <name>NAD(+)</name>
        <dbReference type="ChEBI" id="CHEBI:57540"/>
    </ligand>
</feature>
<feature type="binding site" evidence="1">
    <location>
        <begin position="123"/>
        <end position="125"/>
    </location>
    <ligand>
        <name>NAD(+)</name>
        <dbReference type="ChEBI" id="CHEBI:57540"/>
    </ligand>
</feature>
<feature type="binding site" evidence="1">
    <location>
        <position position="125"/>
    </location>
    <ligand>
        <name>substrate</name>
    </ligand>
</feature>
<feature type="binding site" evidence="1">
    <location>
        <position position="156"/>
    </location>
    <ligand>
        <name>substrate</name>
    </ligand>
</feature>
<comment type="function">
    <text evidence="1">Catalyzes the reversible oxidation of malate to oxaloacetate.</text>
</comment>
<comment type="catalytic activity">
    <reaction evidence="1">
        <text>(S)-malate + NAD(+) = oxaloacetate + NADH + H(+)</text>
        <dbReference type="Rhea" id="RHEA:21432"/>
        <dbReference type="ChEBI" id="CHEBI:15378"/>
        <dbReference type="ChEBI" id="CHEBI:15589"/>
        <dbReference type="ChEBI" id="CHEBI:16452"/>
        <dbReference type="ChEBI" id="CHEBI:57540"/>
        <dbReference type="ChEBI" id="CHEBI:57945"/>
        <dbReference type="EC" id="1.1.1.37"/>
    </reaction>
</comment>
<comment type="similarity">
    <text evidence="1">Belongs to the LDH/MDH superfamily. MDH type 3 family.</text>
</comment>
<protein>
    <recommendedName>
        <fullName evidence="1">Malate dehydrogenase</fullName>
        <ecNumber evidence="1">1.1.1.37</ecNumber>
    </recommendedName>
</protein>
<organism>
    <name type="scientific">Anaplasma marginale (strain Florida)</name>
    <dbReference type="NCBI Taxonomy" id="320483"/>
    <lineage>
        <taxon>Bacteria</taxon>
        <taxon>Pseudomonadati</taxon>
        <taxon>Pseudomonadota</taxon>
        <taxon>Alphaproteobacteria</taxon>
        <taxon>Rickettsiales</taxon>
        <taxon>Anaplasmataceae</taxon>
        <taxon>Anaplasma</taxon>
    </lineage>
</organism>
<name>MDH_ANAMF</name>
<accession>B9KIH0</accession>
<proteinExistence type="inferred from homology"/>
<sequence>MRSSRSAKVSLVGAGNIGGALAHMLGASQVVKELVLVDVAGGMTEGKVLDVGQALALLGSDVYITGGSDYAAIEHSDAVVVTAGIPRKEGMSREDLLNTNAAVVRNIAENIAKYSPGALVIVVTNPLDAMVWCMYKYSGLPANRVVGMAGVLDSARFSFFLARHMNVSVSSVSAMVLGGHGDLMLPLLRYSTVGGVPVESLIESGRLNRGDIAAIVERTRKGGEEIVKLLKTGSAYCAPAASCAHMLESYVRDKRSIMPCSAYLDGQYGVRDLFVGVPVIIGEKGVEEVVEFPLTAEEQAVFDQSVELIRGSVSAIS</sequence>
<reference key="1">
    <citation type="journal article" date="2009" name="BMC Genomics">
        <title>Conservation in the face of diversity: multistrain analysis of an intracellular bacterium.</title>
        <authorList>
            <person name="Dark M.J."/>
            <person name="Herndon D.R."/>
            <person name="Kappmeyer L.S."/>
            <person name="Gonzales M.P."/>
            <person name="Nordeen E."/>
            <person name="Palmer G.H."/>
            <person name="Knowles D.P. Jr."/>
            <person name="Brayton K.A."/>
        </authorList>
    </citation>
    <scope>NUCLEOTIDE SEQUENCE [LARGE SCALE GENOMIC DNA]</scope>
    <source>
        <strain>Florida</strain>
    </source>
</reference>
<dbReference type="EC" id="1.1.1.37" evidence="1"/>
<dbReference type="EMBL" id="CP001079">
    <property type="protein sequence ID" value="ACM49282.1"/>
    <property type="molecule type" value="Genomic_DNA"/>
</dbReference>
<dbReference type="RefSeq" id="WP_012658941.1">
    <property type="nucleotide sequence ID" value="NZ_AFMS01000024.1"/>
</dbReference>
<dbReference type="SMR" id="B9KIH0"/>
<dbReference type="STRING" id="320483.AMF_421"/>
<dbReference type="GeneID" id="7397962"/>
<dbReference type="KEGG" id="amf:AMF_421"/>
<dbReference type="PATRIC" id="fig|320483.3.peg.493"/>
<dbReference type="eggNOG" id="COG0039">
    <property type="taxonomic scope" value="Bacteria"/>
</dbReference>
<dbReference type="HOGENOM" id="CLU_045401_2_1_5"/>
<dbReference type="Proteomes" id="UP000007307">
    <property type="component" value="Chromosome"/>
</dbReference>
<dbReference type="GO" id="GO:0004459">
    <property type="term" value="F:L-lactate dehydrogenase activity"/>
    <property type="evidence" value="ECO:0007669"/>
    <property type="project" value="TreeGrafter"/>
</dbReference>
<dbReference type="GO" id="GO:0030060">
    <property type="term" value="F:L-malate dehydrogenase (NAD+) activity"/>
    <property type="evidence" value="ECO:0007669"/>
    <property type="project" value="UniProtKB-UniRule"/>
</dbReference>
<dbReference type="GO" id="GO:0006089">
    <property type="term" value="P:lactate metabolic process"/>
    <property type="evidence" value="ECO:0007669"/>
    <property type="project" value="TreeGrafter"/>
</dbReference>
<dbReference type="GO" id="GO:0006099">
    <property type="term" value="P:tricarboxylic acid cycle"/>
    <property type="evidence" value="ECO:0007669"/>
    <property type="project" value="UniProtKB-UniRule"/>
</dbReference>
<dbReference type="CDD" id="cd01339">
    <property type="entry name" value="LDH-like_MDH"/>
    <property type="match status" value="1"/>
</dbReference>
<dbReference type="FunFam" id="3.40.50.720:FF:000018">
    <property type="entry name" value="Malate dehydrogenase"/>
    <property type="match status" value="1"/>
</dbReference>
<dbReference type="FunFam" id="3.90.110.10:FF:000004">
    <property type="entry name" value="Malate dehydrogenase"/>
    <property type="match status" value="1"/>
</dbReference>
<dbReference type="Gene3D" id="3.90.110.10">
    <property type="entry name" value="Lactate dehydrogenase/glycoside hydrolase, family 4, C-terminal"/>
    <property type="match status" value="1"/>
</dbReference>
<dbReference type="Gene3D" id="3.40.50.720">
    <property type="entry name" value="NAD(P)-binding Rossmann-like Domain"/>
    <property type="match status" value="1"/>
</dbReference>
<dbReference type="HAMAP" id="MF_00487">
    <property type="entry name" value="Malate_dehydrog_3"/>
    <property type="match status" value="1"/>
</dbReference>
<dbReference type="InterPro" id="IPR001557">
    <property type="entry name" value="L-lactate/malate_DH"/>
</dbReference>
<dbReference type="InterPro" id="IPR022383">
    <property type="entry name" value="Lactate/malate_DH_C"/>
</dbReference>
<dbReference type="InterPro" id="IPR001236">
    <property type="entry name" value="Lactate/malate_DH_N"/>
</dbReference>
<dbReference type="InterPro" id="IPR015955">
    <property type="entry name" value="Lactate_DH/Glyco_Ohase_4_C"/>
</dbReference>
<dbReference type="InterPro" id="IPR011275">
    <property type="entry name" value="Malate_DH_type3"/>
</dbReference>
<dbReference type="InterPro" id="IPR036291">
    <property type="entry name" value="NAD(P)-bd_dom_sf"/>
</dbReference>
<dbReference type="NCBIfam" id="TIGR01763">
    <property type="entry name" value="MalateDH_bact"/>
    <property type="match status" value="1"/>
</dbReference>
<dbReference type="NCBIfam" id="NF004863">
    <property type="entry name" value="PRK06223.1"/>
    <property type="match status" value="1"/>
</dbReference>
<dbReference type="PANTHER" id="PTHR43128">
    <property type="entry name" value="L-2-HYDROXYCARBOXYLATE DEHYDROGENASE (NAD(P)(+))"/>
    <property type="match status" value="1"/>
</dbReference>
<dbReference type="PANTHER" id="PTHR43128:SF16">
    <property type="entry name" value="L-LACTATE DEHYDROGENASE"/>
    <property type="match status" value="1"/>
</dbReference>
<dbReference type="Pfam" id="PF02866">
    <property type="entry name" value="Ldh_1_C"/>
    <property type="match status" value="1"/>
</dbReference>
<dbReference type="Pfam" id="PF00056">
    <property type="entry name" value="Ldh_1_N"/>
    <property type="match status" value="1"/>
</dbReference>
<dbReference type="PIRSF" id="PIRSF000102">
    <property type="entry name" value="Lac_mal_DH"/>
    <property type="match status" value="1"/>
</dbReference>
<dbReference type="PRINTS" id="PR00086">
    <property type="entry name" value="LLDHDRGNASE"/>
</dbReference>
<dbReference type="SUPFAM" id="SSF56327">
    <property type="entry name" value="LDH C-terminal domain-like"/>
    <property type="match status" value="1"/>
</dbReference>
<dbReference type="SUPFAM" id="SSF51735">
    <property type="entry name" value="NAD(P)-binding Rossmann-fold domains"/>
    <property type="match status" value="1"/>
</dbReference>